<keyword id="KW-0325">Glycoprotein</keyword>
<keyword id="KW-1185">Reference proteome</keyword>
<keyword id="KW-0964">Secreted</keyword>
<keyword id="KW-0732">Signal</keyword>
<feature type="signal peptide" evidence="1">
    <location>
        <begin position="1"/>
        <end position="20"/>
    </location>
</feature>
<feature type="chain" id="PRO_0000247378" description="Uncharacterized protein L798">
    <location>
        <begin position="21"/>
        <end position="261"/>
    </location>
</feature>
<feature type="glycosylation site" description="N-linked (GlcNAc...) asparagine; by host" evidence="1">
    <location>
        <position position="22"/>
    </location>
</feature>
<feature type="glycosylation site" description="N-linked (GlcNAc...) asparagine; by host" evidence="1">
    <location>
        <position position="27"/>
    </location>
</feature>
<sequence>MKIQVMLIIIFVGIFTICLAENATKSNESDKSDKSDKSDKPDLSDAIGKVGALLGDPVVTTAIEVLKSLKTESSTTISDRYDQTGFLSINNNYDYSKGAILISRMDELISHWLDDNTYDFITDKQKKTISKALKEYTLQLAEDPYYKQKYELSFSDGKGSLFMMILSVSPHPTNINAIRWEKYILQTDFVPAPSYVIVTESDCDILSCDRTDKIVYLPTVLNQAHMDQIISMNLGMLTGFTNSLNNFNSLNNPDNSNMLGK</sequence>
<organismHost>
    <name type="scientific">Acanthamoeba polyphaga</name>
    <name type="common">Amoeba</name>
    <dbReference type="NCBI Taxonomy" id="5757"/>
</organismHost>
<dbReference type="EMBL" id="AY653733">
    <property type="protein sequence ID" value="AAV51058.1"/>
    <property type="molecule type" value="Genomic_DNA"/>
</dbReference>
<dbReference type="SMR" id="Q5UQ37"/>
<dbReference type="KEGG" id="vg:9925460"/>
<dbReference type="Proteomes" id="UP000001134">
    <property type="component" value="Genome"/>
</dbReference>
<dbReference type="GO" id="GO:0005576">
    <property type="term" value="C:extracellular region"/>
    <property type="evidence" value="ECO:0007669"/>
    <property type="project" value="UniProtKB-SubCell"/>
</dbReference>
<protein>
    <recommendedName>
        <fullName>Uncharacterized protein L798</fullName>
    </recommendedName>
</protein>
<name>YL798_MIMIV</name>
<comment type="subcellular location">
    <subcellularLocation>
        <location evidence="2">Secreted</location>
    </subcellularLocation>
</comment>
<accession>Q5UQ37</accession>
<proteinExistence type="inferred from homology"/>
<reference key="1">
    <citation type="journal article" date="2004" name="Science">
        <title>The 1.2-megabase genome sequence of Mimivirus.</title>
        <authorList>
            <person name="Raoult D."/>
            <person name="Audic S."/>
            <person name="Robert C."/>
            <person name="Abergel C."/>
            <person name="Renesto P."/>
            <person name="Ogata H."/>
            <person name="La Scola B."/>
            <person name="Susan M."/>
            <person name="Claverie J.-M."/>
        </authorList>
    </citation>
    <scope>NUCLEOTIDE SEQUENCE [LARGE SCALE GENOMIC DNA]</scope>
    <source>
        <strain>Rowbotham-Bradford</strain>
    </source>
</reference>
<organism>
    <name type="scientific">Acanthamoeba polyphaga mimivirus</name>
    <name type="common">APMV</name>
    <dbReference type="NCBI Taxonomy" id="212035"/>
    <lineage>
        <taxon>Viruses</taxon>
        <taxon>Varidnaviria</taxon>
        <taxon>Bamfordvirae</taxon>
        <taxon>Nucleocytoviricota</taxon>
        <taxon>Megaviricetes</taxon>
        <taxon>Imitervirales</taxon>
        <taxon>Mimiviridae</taxon>
        <taxon>Megamimivirinae</taxon>
        <taxon>Mimivirus</taxon>
        <taxon>Mimivirus bradfordmassiliense</taxon>
    </lineage>
</organism>
<evidence type="ECO:0000255" key="1"/>
<evidence type="ECO:0000305" key="2"/>
<gene>
    <name type="ordered locus">MIMI_L798</name>
</gene>